<proteinExistence type="inferred from homology"/>
<feature type="chain" id="PRO_1000147908" description="Probable 5-dehydro-4-deoxyglucarate dehydratase">
    <location>
        <begin position="1"/>
        <end position="304"/>
    </location>
</feature>
<comment type="catalytic activity">
    <reaction evidence="1">
        <text>5-dehydro-4-deoxy-D-glucarate + H(+) = 2,5-dioxopentanoate + CO2 + H2O</text>
        <dbReference type="Rhea" id="RHEA:24608"/>
        <dbReference type="ChEBI" id="CHEBI:15377"/>
        <dbReference type="ChEBI" id="CHEBI:15378"/>
        <dbReference type="ChEBI" id="CHEBI:16526"/>
        <dbReference type="ChEBI" id="CHEBI:42819"/>
        <dbReference type="ChEBI" id="CHEBI:58136"/>
        <dbReference type="EC" id="4.2.1.41"/>
    </reaction>
</comment>
<comment type="pathway">
    <text evidence="1">Carbohydrate acid metabolism; D-glucarate degradation; 2,5-dioxopentanoate from D-glucarate: step 2/2.</text>
</comment>
<comment type="similarity">
    <text evidence="1">Belongs to the DapA family.</text>
</comment>
<gene>
    <name type="ordered locus">ROP_28690</name>
</gene>
<evidence type="ECO:0000255" key="1">
    <source>
        <dbReference type="HAMAP-Rule" id="MF_00694"/>
    </source>
</evidence>
<accession>C1B5J0</accession>
<protein>
    <recommendedName>
        <fullName evidence="1">Probable 5-dehydro-4-deoxyglucarate dehydratase</fullName>
        <ecNumber evidence="1">4.2.1.41</ecNumber>
    </recommendedName>
    <alternativeName>
        <fullName evidence="1">5-keto-4-deoxy-glucarate dehydratase</fullName>
        <shortName evidence="1">KDGDH</shortName>
    </alternativeName>
</protein>
<reference key="1">
    <citation type="submission" date="2009-03" db="EMBL/GenBank/DDBJ databases">
        <title>Comparison of the complete genome sequences of Rhodococcus erythropolis PR4 and Rhodococcus opacus B4.</title>
        <authorList>
            <person name="Takarada H."/>
            <person name="Sekine M."/>
            <person name="Hosoyama A."/>
            <person name="Yamada R."/>
            <person name="Fujisawa T."/>
            <person name="Omata S."/>
            <person name="Shimizu A."/>
            <person name="Tsukatani N."/>
            <person name="Tanikawa S."/>
            <person name="Fujita N."/>
            <person name="Harayama S."/>
        </authorList>
    </citation>
    <scope>NUCLEOTIDE SEQUENCE [LARGE SCALE GENOMIC DNA]</scope>
    <source>
        <strain>B4</strain>
    </source>
</reference>
<dbReference type="EC" id="4.2.1.41" evidence="1"/>
<dbReference type="EMBL" id="AP011115">
    <property type="protein sequence ID" value="BAH51116.1"/>
    <property type="molecule type" value="Genomic_DNA"/>
</dbReference>
<dbReference type="RefSeq" id="WP_012690072.1">
    <property type="nucleotide sequence ID" value="NC_012522.1"/>
</dbReference>
<dbReference type="SMR" id="C1B5J0"/>
<dbReference type="STRING" id="632772.ROP_28690"/>
<dbReference type="KEGG" id="rop:ROP_28690"/>
<dbReference type="PATRIC" id="fig|632772.20.peg.2997"/>
<dbReference type="HOGENOM" id="CLU_049343_5_2_11"/>
<dbReference type="OrthoDB" id="8995637at2"/>
<dbReference type="UniPathway" id="UPA00564">
    <property type="reaction ID" value="UER00628"/>
</dbReference>
<dbReference type="Proteomes" id="UP000002212">
    <property type="component" value="Chromosome"/>
</dbReference>
<dbReference type="GO" id="GO:0008840">
    <property type="term" value="F:4-hydroxy-tetrahydrodipicolinate synthase activity"/>
    <property type="evidence" value="ECO:0007669"/>
    <property type="project" value="TreeGrafter"/>
</dbReference>
<dbReference type="GO" id="GO:0047448">
    <property type="term" value="F:5-dehydro-4-deoxyglucarate dehydratase activity"/>
    <property type="evidence" value="ECO:0007669"/>
    <property type="project" value="UniProtKB-UniRule"/>
</dbReference>
<dbReference type="GO" id="GO:0042838">
    <property type="term" value="P:D-glucarate catabolic process"/>
    <property type="evidence" value="ECO:0007669"/>
    <property type="project" value="UniProtKB-UniRule"/>
</dbReference>
<dbReference type="CDD" id="cd00951">
    <property type="entry name" value="KDGDH"/>
    <property type="match status" value="1"/>
</dbReference>
<dbReference type="Gene3D" id="3.20.20.70">
    <property type="entry name" value="Aldolase class I"/>
    <property type="match status" value="1"/>
</dbReference>
<dbReference type="HAMAP" id="MF_00694">
    <property type="entry name" value="KDGDH"/>
    <property type="match status" value="1"/>
</dbReference>
<dbReference type="InterPro" id="IPR013785">
    <property type="entry name" value="Aldolase_TIM"/>
</dbReference>
<dbReference type="InterPro" id="IPR002220">
    <property type="entry name" value="DapA-like"/>
</dbReference>
<dbReference type="InterPro" id="IPR017655">
    <property type="entry name" value="Dehydro-deoxyglucarate_dehyd"/>
</dbReference>
<dbReference type="NCBIfam" id="TIGR03249">
    <property type="entry name" value="KdgD"/>
    <property type="match status" value="1"/>
</dbReference>
<dbReference type="NCBIfam" id="NF002958">
    <property type="entry name" value="PRK03620.1"/>
    <property type="match status" value="1"/>
</dbReference>
<dbReference type="PANTHER" id="PTHR12128:SF19">
    <property type="entry name" value="5-DEHYDRO-4-DEOXYGLUCARATE DEHYDRATASE 2-RELATED"/>
    <property type="match status" value="1"/>
</dbReference>
<dbReference type="PANTHER" id="PTHR12128">
    <property type="entry name" value="DIHYDRODIPICOLINATE SYNTHASE"/>
    <property type="match status" value="1"/>
</dbReference>
<dbReference type="Pfam" id="PF00701">
    <property type="entry name" value="DHDPS"/>
    <property type="match status" value="1"/>
</dbReference>
<dbReference type="PIRSF" id="PIRSF001365">
    <property type="entry name" value="DHDPS"/>
    <property type="match status" value="1"/>
</dbReference>
<dbReference type="SMART" id="SM01130">
    <property type="entry name" value="DHDPS"/>
    <property type="match status" value="1"/>
</dbReference>
<dbReference type="SUPFAM" id="SSF51569">
    <property type="entry name" value="Aldolase"/>
    <property type="match status" value="1"/>
</dbReference>
<organism>
    <name type="scientific">Rhodococcus opacus (strain B4)</name>
    <dbReference type="NCBI Taxonomy" id="632772"/>
    <lineage>
        <taxon>Bacteria</taxon>
        <taxon>Bacillati</taxon>
        <taxon>Actinomycetota</taxon>
        <taxon>Actinomycetes</taxon>
        <taxon>Mycobacteriales</taxon>
        <taxon>Nocardiaceae</taxon>
        <taxon>Rhodococcus</taxon>
    </lineage>
</organism>
<keyword id="KW-0456">Lyase</keyword>
<sequence>MITASPQEIAHKLGSGLLSFPVTHFTDDHSFDEAAYRENIGWLGQFDASGLFAAGGTGEFFSLTPPEVEQVVRAAVQEAPDGLPVIAPAGYGTATAVQMARSAESAGAHGILLLPPYLTEASQDGLVAHVKEVCAATTLGVTIYSRANAVYTEAAVAELADSCPNLVGFKDGVGNIEQMTRIYASLGDRLTYVGGLPTAEMFALPYLALGVTTYSSAIYNFVPQFALDFYNALRSGDNAFVVNALNDFVIPYCNLRNKKQGYAVSIIKAGMKVIDRPAGPVRPPLTDLDAVELAELADLIKKVS</sequence>
<name>KDGD_RHOOB</name>